<evidence type="ECO:0000255" key="1">
    <source>
        <dbReference type="HAMAP-Rule" id="MF_01449"/>
    </source>
</evidence>
<comment type="function">
    <text evidence="1">Activates the small RNA gene sgrS under glucose-phosphate stress conditions as well as yfdZ. Represses its own transcription under both stress and non-stress conditions. Might act as a sensor of the intracellular accumulation of phosphoglucose by binding these molecules in its C-terminal solute-binding domain.</text>
</comment>
<accession>Q326G6</accession>
<reference key="1">
    <citation type="journal article" date="2005" name="Nucleic Acids Res.">
        <title>Genome dynamics and diversity of Shigella species, the etiologic agents of bacillary dysentery.</title>
        <authorList>
            <person name="Yang F."/>
            <person name="Yang J."/>
            <person name="Zhang X."/>
            <person name="Chen L."/>
            <person name="Jiang Y."/>
            <person name="Yan Y."/>
            <person name="Tang X."/>
            <person name="Wang J."/>
            <person name="Xiong Z."/>
            <person name="Dong J."/>
            <person name="Xue Y."/>
            <person name="Zhu Y."/>
            <person name="Xu X."/>
            <person name="Sun L."/>
            <person name="Chen S."/>
            <person name="Nie H."/>
            <person name="Peng J."/>
            <person name="Xu J."/>
            <person name="Wang Y."/>
            <person name="Yuan Z."/>
            <person name="Wen Y."/>
            <person name="Yao Z."/>
            <person name="Shen Y."/>
            <person name="Qiang B."/>
            <person name="Hou Y."/>
            <person name="Yu J."/>
            <person name="Jin Q."/>
        </authorList>
    </citation>
    <scope>NUCLEOTIDE SEQUENCE [LARGE SCALE GENOMIC DNA]</scope>
    <source>
        <strain>Sb227</strain>
    </source>
</reference>
<proteinExistence type="inferred from homology"/>
<protein>
    <recommendedName>
        <fullName evidence="1">HTH-type transcriptional regulator SgrR</fullName>
    </recommendedName>
</protein>
<gene>
    <name evidence="1" type="primary">sgrR</name>
    <name type="ordered locus">SBO_0056</name>
</gene>
<dbReference type="EMBL" id="CP000036">
    <property type="protein sequence ID" value="ABB64792.1"/>
    <property type="molecule type" value="Genomic_DNA"/>
</dbReference>
<dbReference type="RefSeq" id="WP_004980478.1">
    <property type="nucleotide sequence ID" value="NC_007613.1"/>
</dbReference>
<dbReference type="SMR" id="Q326G6"/>
<dbReference type="KEGG" id="sbo:SBO_0056"/>
<dbReference type="HOGENOM" id="CLU_017028_12_3_6"/>
<dbReference type="Proteomes" id="UP000007067">
    <property type="component" value="Chromosome"/>
</dbReference>
<dbReference type="GO" id="GO:0003677">
    <property type="term" value="F:DNA binding"/>
    <property type="evidence" value="ECO:0007669"/>
    <property type="project" value="UniProtKB-KW"/>
</dbReference>
<dbReference type="GO" id="GO:1904680">
    <property type="term" value="F:peptide transmembrane transporter activity"/>
    <property type="evidence" value="ECO:0007669"/>
    <property type="project" value="TreeGrafter"/>
</dbReference>
<dbReference type="GO" id="GO:0045892">
    <property type="term" value="P:negative regulation of DNA-templated transcription"/>
    <property type="evidence" value="ECO:0007669"/>
    <property type="project" value="UniProtKB-UniRule"/>
</dbReference>
<dbReference type="GO" id="GO:0015833">
    <property type="term" value="P:peptide transport"/>
    <property type="evidence" value="ECO:0007669"/>
    <property type="project" value="TreeGrafter"/>
</dbReference>
<dbReference type="GO" id="GO:0045893">
    <property type="term" value="P:positive regulation of DNA-templated transcription"/>
    <property type="evidence" value="ECO:0007669"/>
    <property type="project" value="UniProtKB-UniRule"/>
</dbReference>
<dbReference type="CDD" id="cd08507">
    <property type="entry name" value="PBP2_SgrR_like"/>
    <property type="match status" value="1"/>
</dbReference>
<dbReference type="FunFam" id="3.40.190.10:FF:000070">
    <property type="entry name" value="HTH-type transcriptional regulator SgrR"/>
    <property type="match status" value="1"/>
</dbReference>
<dbReference type="Gene3D" id="3.40.190.10">
    <property type="entry name" value="Periplasmic binding protein-like II"/>
    <property type="match status" value="1"/>
</dbReference>
<dbReference type="HAMAP" id="MF_01449">
    <property type="entry name" value="HTH_type_SgrR"/>
    <property type="match status" value="1"/>
</dbReference>
<dbReference type="InterPro" id="IPR039424">
    <property type="entry name" value="SBP_5"/>
</dbReference>
<dbReference type="InterPro" id="IPR000914">
    <property type="entry name" value="SBP_5_dom"/>
</dbReference>
<dbReference type="InterPro" id="IPR025370">
    <property type="entry name" value="SgrR_HTH_N"/>
</dbReference>
<dbReference type="InterPro" id="IPR023767">
    <property type="entry name" value="Tscrpt_reg_SgrR"/>
</dbReference>
<dbReference type="NCBIfam" id="NF010149">
    <property type="entry name" value="PRK13626.1"/>
    <property type="match status" value="1"/>
</dbReference>
<dbReference type="PANTHER" id="PTHR30290:SF72">
    <property type="entry name" value="HTH-TYPE TRANSCRIPTIONAL REGULATOR SGRR"/>
    <property type="match status" value="1"/>
</dbReference>
<dbReference type="PANTHER" id="PTHR30290">
    <property type="entry name" value="PERIPLASMIC BINDING COMPONENT OF ABC TRANSPORTER"/>
    <property type="match status" value="1"/>
</dbReference>
<dbReference type="Pfam" id="PF00496">
    <property type="entry name" value="SBP_bac_5"/>
    <property type="match status" value="1"/>
</dbReference>
<dbReference type="Pfam" id="PF12793">
    <property type="entry name" value="SgrR_N"/>
    <property type="match status" value="1"/>
</dbReference>
<dbReference type="SUPFAM" id="SSF53850">
    <property type="entry name" value="Periplasmic binding protein-like II"/>
    <property type="match status" value="1"/>
</dbReference>
<organism>
    <name type="scientific">Shigella boydii serotype 4 (strain Sb227)</name>
    <dbReference type="NCBI Taxonomy" id="300268"/>
    <lineage>
        <taxon>Bacteria</taxon>
        <taxon>Pseudomonadati</taxon>
        <taxon>Pseudomonadota</taxon>
        <taxon>Gammaproteobacteria</taxon>
        <taxon>Enterobacterales</taxon>
        <taxon>Enterobacteriaceae</taxon>
        <taxon>Shigella</taxon>
    </lineage>
</organism>
<sequence length="551" mass="64031">MPSARLQQQFIRLWQCCEGKSQDTTLNELAALLSCSRRHMRTLLNTMQDRGWLTWEAEVGRGKRSRLTFLYTGLALQQQRAEDLLEQDRIDQLVQLVGDKATVRQMLVSHLGRSFRQGRHILRVLYYRPLRNLLPGSALRRSETHIARQIFSSLTRINEENGELEADIAHHWQQISPLHWRFFLRPGVHFHHGRELEMDDVIASLKRINTLPLYSHIADIVSPTPWTLDIHLTQPDRWLPLLLGQVPAMILPREWETLSNFASHPIGTGPYAVIRNTTNQLKIQAFDDFFGYRALIDEVNVWVLPEIADEPAGGLMLKGPQGEEKEIESRLEEGCYYLLFDSRTHRGANQQVRDWVNYVLSPTNLVYFAEEQYQQLWFPAYGLLPRWHHARTIKSEKPAGLESLTLTFYQDHSEHRVIAGIMQQILASHQVTLEIKEISYDQWHEGEIESDIWLNSANFTLPLDFSLFAHLCEVPLLQHCIPIDWQADAARWRNGEMNLANWCQQLVASKAMVPLIHHWLIIQGQRSMRGLRMNTLGWFDFKSAWFAPPDP</sequence>
<keyword id="KW-0010">Activator</keyword>
<keyword id="KW-0238">DNA-binding</keyword>
<keyword id="KW-0678">Repressor</keyword>
<keyword id="KW-0804">Transcription</keyword>
<keyword id="KW-0805">Transcription regulation</keyword>
<feature type="chain" id="PRO_0000309251" description="HTH-type transcriptional regulator SgrR">
    <location>
        <begin position="1"/>
        <end position="551"/>
    </location>
</feature>
<feature type="domain" description="HTH marR-type" evidence="1">
    <location>
        <begin position="1"/>
        <end position="116"/>
    </location>
</feature>
<feature type="DNA-binding region" description="H-T-H motif" evidence="1">
    <location>
        <begin position="26"/>
        <end position="49"/>
    </location>
</feature>
<feature type="region of interest" description="Solute-binding" evidence="1">
    <location>
        <begin position="163"/>
        <end position="492"/>
    </location>
</feature>
<name>SGRR_SHIBS</name>